<proteinExistence type="inferred from homology"/>
<sequence>MVATSKQTTQGYVVEAYGNLLRVHVDGHVRQGEVAYVSVDNTWLKAEIIEVVGDEVKIQVFEETQGISRGALVTFSGHLLEAELGPGLLQGIFDGLQNRLEILADTSLFLRRGEYVNAICRETVWAYTQKASVGSVLSRGDVLGTVKEGRFDHKIMVPFSCFEEVTITWVISSGNYTVDTVVAKGRTSTGEELEFTMVQKWPIKQAFLEGEKVPSHEIMDVGLRVLDTQIPVLKGGTFCTPGPFGAGKTVLQHHLSKYAAVDIVVLCACGERAGEVVEILQEFPHLKDPHTGQSLMHRTCIICNTSSMPVAARESSIYLGITIAEYYRQMGLHILLLADSTSRWAQALREISGRLEEIPGEEAFPAYLASRIAAFYERGGAVKMKDGSEGSLTICGAVSPAGGNFEEPVTQATLSVVGAFCGLSKARADARRYPSIDPMISWSKYLDSVAEILEKKVPGWGESVKQASRFLEEGAEIGKRIEVVGEEGISMEDMEIFLKSELYDFCYLQQNAFDAEDCYCPFDRQIELFSLMNHIFNSRFCFDCPDNARSFFLELQSKIKTLNGQKFLSEEYQKGLEVIYKLLESKMVQTA</sequence>
<name>VATA_CHLT2</name>
<feature type="chain" id="PRO_1000115634" description="V-type ATP synthase alpha chain">
    <location>
        <begin position="1"/>
        <end position="591"/>
    </location>
</feature>
<feature type="binding site" evidence="1">
    <location>
        <begin position="242"/>
        <end position="249"/>
    </location>
    <ligand>
        <name>ATP</name>
        <dbReference type="ChEBI" id="CHEBI:30616"/>
    </ligand>
</feature>
<organism>
    <name type="scientific">Chlamydia trachomatis serovar L2 (strain ATCC VR-902B / DSM 19102 / 434/Bu)</name>
    <dbReference type="NCBI Taxonomy" id="471472"/>
    <lineage>
        <taxon>Bacteria</taxon>
        <taxon>Pseudomonadati</taxon>
        <taxon>Chlamydiota</taxon>
        <taxon>Chlamydiia</taxon>
        <taxon>Chlamydiales</taxon>
        <taxon>Chlamydiaceae</taxon>
        <taxon>Chlamydia/Chlamydophila group</taxon>
        <taxon>Chlamydia</taxon>
    </lineage>
</organism>
<evidence type="ECO:0000255" key="1">
    <source>
        <dbReference type="HAMAP-Rule" id="MF_00309"/>
    </source>
</evidence>
<accession>B0B7M4</accession>
<keyword id="KW-0066">ATP synthesis</keyword>
<keyword id="KW-0067">ATP-binding</keyword>
<keyword id="KW-0375">Hydrogen ion transport</keyword>
<keyword id="KW-0406">Ion transport</keyword>
<keyword id="KW-0547">Nucleotide-binding</keyword>
<keyword id="KW-1278">Translocase</keyword>
<keyword id="KW-0813">Transport</keyword>
<protein>
    <recommendedName>
        <fullName evidence="1">V-type ATP synthase alpha chain</fullName>
        <ecNumber evidence="1">7.1.2.2</ecNumber>
    </recommendedName>
    <alternativeName>
        <fullName evidence="1">V-ATPase subunit A</fullName>
    </alternativeName>
</protein>
<gene>
    <name evidence="1" type="primary">atpA</name>
    <name type="ordered locus">CTL0560</name>
</gene>
<dbReference type="EC" id="7.1.2.2" evidence="1"/>
<dbReference type="EMBL" id="AM884176">
    <property type="protein sequence ID" value="CAP04000.1"/>
    <property type="molecule type" value="Genomic_DNA"/>
</dbReference>
<dbReference type="RefSeq" id="WP_009873713.1">
    <property type="nucleotide sequence ID" value="NC_010287.1"/>
</dbReference>
<dbReference type="RefSeq" id="YP_001654636.1">
    <property type="nucleotide sequence ID" value="NC_010287.1"/>
</dbReference>
<dbReference type="SMR" id="B0B7M4"/>
<dbReference type="KEGG" id="ctb:CTL0560"/>
<dbReference type="PATRIC" id="fig|471472.4.peg.601"/>
<dbReference type="HOGENOM" id="CLU_008162_1_1_0"/>
<dbReference type="Proteomes" id="UP001154402">
    <property type="component" value="Chromosome"/>
</dbReference>
<dbReference type="GO" id="GO:0005524">
    <property type="term" value="F:ATP binding"/>
    <property type="evidence" value="ECO:0007669"/>
    <property type="project" value="UniProtKB-UniRule"/>
</dbReference>
<dbReference type="GO" id="GO:0046933">
    <property type="term" value="F:proton-transporting ATP synthase activity, rotational mechanism"/>
    <property type="evidence" value="ECO:0007669"/>
    <property type="project" value="UniProtKB-UniRule"/>
</dbReference>
<dbReference type="GO" id="GO:0046961">
    <property type="term" value="F:proton-transporting ATPase activity, rotational mechanism"/>
    <property type="evidence" value="ECO:0007669"/>
    <property type="project" value="InterPro"/>
</dbReference>
<dbReference type="GO" id="GO:0042777">
    <property type="term" value="P:proton motive force-driven plasma membrane ATP synthesis"/>
    <property type="evidence" value="ECO:0007669"/>
    <property type="project" value="UniProtKB-UniRule"/>
</dbReference>
<dbReference type="CDD" id="cd01426">
    <property type="entry name" value="ATP-synt_F1_V1_A1_AB_FliI_N"/>
    <property type="match status" value="1"/>
</dbReference>
<dbReference type="CDD" id="cd18111">
    <property type="entry name" value="ATP-synt_V_A-type_alpha_C"/>
    <property type="match status" value="1"/>
</dbReference>
<dbReference type="CDD" id="cd01134">
    <property type="entry name" value="V_A-ATPase_A"/>
    <property type="match status" value="1"/>
</dbReference>
<dbReference type="FunFam" id="1.10.1140.10:FF:000007">
    <property type="entry name" value="V-type ATP synthase alpha chain"/>
    <property type="match status" value="1"/>
</dbReference>
<dbReference type="FunFam" id="3.40.50.300:FF:000675">
    <property type="entry name" value="V-type ATP synthase alpha chain"/>
    <property type="match status" value="1"/>
</dbReference>
<dbReference type="Gene3D" id="2.30.30.650">
    <property type="match status" value="1"/>
</dbReference>
<dbReference type="Gene3D" id="2.40.50.100">
    <property type="match status" value="1"/>
</dbReference>
<dbReference type="Gene3D" id="1.10.1140.10">
    <property type="entry name" value="Bovine Mitochondrial F1-atpase, Atp Synthase Beta Chain, Chain D, domain 3"/>
    <property type="match status" value="1"/>
</dbReference>
<dbReference type="Gene3D" id="3.40.50.300">
    <property type="entry name" value="P-loop containing nucleotide triphosphate hydrolases"/>
    <property type="match status" value="1"/>
</dbReference>
<dbReference type="HAMAP" id="MF_00309">
    <property type="entry name" value="ATP_synth_A_arch"/>
    <property type="match status" value="1"/>
</dbReference>
<dbReference type="InterPro" id="IPR055190">
    <property type="entry name" value="ATP-synt_VA_C"/>
</dbReference>
<dbReference type="InterPro" id="IPR031686">
    <property type="entry name" value="ATP-synth_a_Xtn"/>
</dbReference>
<dbReference type="InterPro" id="IPR020003">
    <property type="entry name" value="ATPase_a/bsu_AS"/>
</dbReference>
<dbReference type="InterPro" id="IPR004100">
    <property type="entry name" value="ATPase_F1/V1/A1_a/bsu_N"/>
</dbReference>
<dbReference type="InterPro" id="IPR000194">
    <property type="entry name" value="ATPase_F1/V1/A1_a/bsu_nucl-bd"/>
</dbReference>
<dbReference type="InterPro" id="IPR024034">
    <property type="entry name" value="ATPase_F1/V1_b/a_C"/>
</dbReference>
<dbReference type="InterPro" id="IPR027417">
    <property type="entry name" value="P-loop_NTPase"/>
</dbReference>
<dbReference type="InterPro" id="IPR022878">
    <property type="entry name" value="V-ATPase_asu"/>
</dbReference>
<dbReference type="NCBIfam" id="NF003220">
    <property type="entry name" value="PRK04192.1"/>
    <property type="match status" value="1"/>
</dbReference>
<dbReference type="PANTHER" id="PTHR43607:SF1">
    <property type="entry name" value="H(+)-TRANSPORTING TWO-SECTOR ATPASE"/>
    <property type="match status" value="1"/>
</dbReference>
<dbReference type="PANTHER" id="PTHR43607">
    <property type="entry name" value="V-TYPE PROTON ATPASE CATALYTIC SUBUNIT A"/>
    <property type="match status" value="1"/>
</dbReference>
<dbReference type="Pfam" id="PF00006">
    <property type="entry name" value="ATP-synt_ab"/>
    <property type="match status" value="1"/>
</dbReference>
<dbReference type="Pfam" id="PF02874">
    <property type="entry name" value="ATP-synt_ab_N"/>
    <property type="match status" value="1"/>
</dbReference>
<dbReference type="Pfam" id="PF16886">
    <property type="entry name" value="ATP-synt_ab_Xtn"/>
    <property type="match status" value="1"/>
</dbReference>
<dbReference type="Pfam" id="PF22919">
    <property type="entry name" value="ATP-synt_VA_C"/>
    <property type="match status" value="1"/>
</dbReference>
<dbReference type="SUPFAM" id="SSF52540">
    <property type="entry name" value="P-loop containing nucleoside triphosphate hydrolases"/>
    <property type="match status" value="1"/>
</dbReference>
<dbReference type="PROSITE" id="PS00152">
    <property type="entry name" value="ATPASE_ALPHA_BETA"/>
    <property type="match status" value="1"/>
</dbReference>
<comment type="function">
    <text evidence="1">Produces ATP from ADP in the presence of a proton gradient across the membrane. The V-type alpha chain is a catalytic subunit.</text>
</comment>
<comment type="catalytic activity">
    <reaction evidence="1">
        <text>ATP + H2O + 4 H(+)(in) = ADP + phosphate + 5 H(+)(out)</text>
        <dbReference type="Rhea" id="RHEA:57720"/>
        <dbReference type="ChEBI" id="CHEBI:15377"/>
        <dbReference type="ChEBI" id="CHEBI:15378"/>
        <dbReference type="ChEBI" id="CHEBI:30616"/>
        <dbReference type="ChEBI" id="CHEBI:43474"/>
        <dbReference type="ChEBI" id="CHEBI:456216"/>
        <dbReference type="EC" id="7.1.2.2"/>
    </reaction>
</comment>
<comment type="similarity">
    <text evidence="1">Belongs to the ATPase alpha/beta chains family.</text>
</comment>
<reference key="1">
    <citation type="journal article" date="2008" name="Genome Res.">
        <title>Chlamydia trachomatis: genome sequence analysis of lymphogranuloma venereum isolates.</title>
        <authorList>
            <person name="Thomson N.R."/>
            <person name="Holden M.T.G."/>
            <person name="Carder C."/>
            <person name="Lennard N."/>
            <person name="Lockey S.J."/>
            <person name="Marsh P."/>
            <person name="Skipp P."/>
            <person name="O'Connor C.D."/>
            <person name="Goodhead I."/>
            <person name="Norbertzcak H."/>
            <person name="Harris B."/>
            <person name="Ormond D."/>
            <person name="Rance R."/>
            <person name="Quail M.A."/>
            <person name="Parkhill J."/>
            <person name="Stephens R.S."/>
            <person name="Clarke I.N."/>
        </authorList>
    </citation>
    <scope>NUCLEOTIDE SEQUENCE [LARGE SCALE GENOMIC DNA]</scope>
    <source>
        <strain>ATCC VR-902B / DSM 19102 / 434/Bu</strain>
    </source>
</reference>